<dbReference type="EMBL" id="CM001232">
    <property type="protein sequence ID" value="EHA55036.1"/>
    <property type="molecule type" value="Genomic_DNA"/>
</dbReference>
<dbReference type="RefSeq" id="XP_003714843.1">
    <property type="nucleotide sequence ID" value="XM_003714795.1"/>
</dbReference>
<dbReference type="SMR" id="Q52F10"/>
<dbReference type="STRING" id="242507.Q52F10"/>
<dbReference type="EnsemblFungi" id="MGG_01826T0">
    <property type="protein sequence ID" value="MGG_01826T0"/>
    <property type="gene ID" value="MGG_01826"/>
</dbReference>
<dbReference type="GeneID" id="2679203"/>
<dbReference type="KEGG" id="mgr:MGG_01826"/>
<dbReference type="VEuPathDB" id="FungiDB:MGG_01826"/>
<dbReference type="eggNOG" id="KOG2654">
    <property type="taxonomic scope" value="Eukaryota"/>
</dbReference>
<dbReference type="HOGENOM" id="CLU_024195_0_0_1"/>
<dbReference type="InParanoid" id="Q52F10"/>
<dbReference type="OMA" id="GDVQRQE"/>
<dbReference type="OrthoDB" id="6022at2759"/>
<dbReference type="Proteomes" id="UP000009058">
    <property type="component" value="Chromosome 2"/>
</dbReference>
<dbReference type="GO" id="GO:0005737">
    <property type="term" value="C:cytoplasm"/>
    <property type="evidence" value="ECO:0007669"/>
    <property type="project" value="UniProtKB-SubCell"/>
</dbReference>
<dbReference type="GO" id="GO:0070274">
    <property type="term" value="C:RES complex"/>
    <property type="evidence" value="ECO:0007669"/>
    <property type="project" value="TreeGrafter"/>
</dbReference>
<dbReference type="GO" id="GO:0005684">
    <property type="term" value="C:U2-type spliceosomal complex"/>
    <property type="evidence" value="ECO:0007669"/>
    <property type="project" value="TreeGrafter"/>
</dbReference>
<dbReference type="GO" id="GO:0003723">
    <property type="term" value="F:RNA binding"/>
    <property type="evidence" value="ECO:0007669"/>
    <property type="project" value="TreeGrafter"/>
</dbReference>
<dbReference type="GO" id="GO:0000398">
    <property type="term" value="P:mRNA splicing, via spliceosome"/>
    <property type="evidence" value="ECO:0007669"/>
    <property type="project" value="TreeGrafter"/>
</dbReference>
<dbReference type="InterPro" id="IPR018609">
    <property type="entry name" value="Bud13"/>
</dbReference>
<dbReference type="InterPro" id="IPR051112">
    <property type="entry name" value="CWC26_splicing_factor"/>
</dbReference>
<dbReference type="PANTHER" id="PTHR31809">
    <property type="entry name" value="BUD13 HOMOLOG"/>
    <property type="match status" value="1"/>
</dbReference>
<dbReference type="PANTHER" id="PTHR31809:SF0">
    <property type="entry name" value="BUD13 HOMOLOG"/>
    <property type="match status" value="1"/>
</dbReference>
<dbReference type="Pfam" id="PF09736">
    <property type="entry name" value="Bud13"/>
    <property type="match status" value="1"/>
</dbReference>
<feature type="chain" id="PRO_0000079605" description="Pre-mRNA-splicing factor CWC26">
    <location>
        <begin position="1"/>
        <end position="352"/>
    </location>
</feature>
<feature type="region of interest" description="Disordered" evidence="3">
    <location>
        <begin position="12"/>
        <end position="100"/>
    </location>
</feature>
<feature type="region of interest" description="Disordered" evidence="3">
    <location>
        <begin position="157"/>
        <end position="199"/>
    </location>
</feature>
<feature type="region of interest" description="Disordered" evidence="3">
    <location>
        <begin position="206"/>
        <end position="225"/>
    </location>
</feature>
<feature type="region of interest" description="Disordered" evidence="3">
    <location>
        <begin position="281"/>
        <end position="314"/>
    </location>
</feature>
<feature type="coiled-coil region" evidence="2">
    <location>
        <begin position="23"/>
        <end position="51"/>
    </location>
</feature>
<feature type="compositionally biased region" description="Basic residues" evidence="3">
    <location>
        <begin position="21"/>
        <end position="30"/>
    </location>
</feature>
<feature type="compositionally biased region" description="Basic and acidic residues" evidence="3">
    <location>
        <begin position="160"/>
        <end position="177"/>
    </location>
</feature>
<accession>Q52F10</accession>
<accession>A4RJH2</accession>
<accession>G4MW76</accession>
<comment type="function">
    <text evidence="1">Involved in pre-mRNA splicing.</text>
</comment>
<comment type="subunit">
    <text evidence="1">Associated with the spliceosome.</text>
</comment>
<comment type="subcellular location">
    <subcellularLocation>
        <location evidence="1">Cytoplasm</location>
    </subcellularLocation>
    <subcellularLocation>
        <location evidence="1">Nucleus</location>
    </subcellularLocation>
</comment>
<comment type="similarity">
    <text evidence="4">Belongs to the CWC26 family.</text>
</comment>
<sequence length="352" mass="38656">MPSDLASYLADHYLTADPKPSKKRKRKHGDSKKIKEGAGLLIQDDDDDAAWTKPSSRDADADELSAAATIAGTSAEFRRATKSSWKTLGGGGSSKTNTDHEAAAADAILASAAAESAAARDAEDDAPVVEGASVAAVKMSDGTHAGLQTAATVAAQLQRRRAEEKAQYERERAERRAARGGGGDSSGEEETVFRDATGRRIDVTLQREQKRKAEAEKQRAAKEALKGEVQIEEARRRREKLEDAALMPLARGKDDEEMNNAMKSEQRWNDPMMQFMSENDKREAGGTAKTGGRRVKGRPVYKGPAAPNRYGIRPGYRWDGVDRGIGFEAERFKALNRRERTKDLEYNWQMDE</sequence>
<keyword id="KW-0175">Coiled coil</keyword>
<keyword id="KW-0963">Cytoplasm</keyword>
<keyword id="KW-0507">mRNA processing</keyword>
<keyword id="KW-0508">mRNA splicing</keyword>
<keyword id="KW-0539">Nucleus</keyword>
<keyword id="KW-1185">Reference proteome</keyword>
<keyword id="KW-0747">Spliceosome</keyword>
<proteinExistence type="inferred from homology"/>
<gene>
    <name type="primary">CWC26</name>
    <name type="ORF">MGG_01826</name>
</gene>
<evidence type="ECO:0000250" key="1"/>
<evidence type="ECO:0000255" key="2"/>
<evidence type="ECO:0000256" key="3">
    <source>
        <dbReference type="SAM" id="MobiDB-lite"/>
    </source>
</evidence>
<evidence type="ECO:0000305" key="4"/>
<name>CWC26_PYRO7</name>
<protein>
    <recommendedName>
        <fullName>Pre-mRNA-splicing factor CWC26</fullName>
    </recommendedName>
</protein>
<organism>
    <name type="scientific">Pyricularia oryzae (strain 70-15 / ATCC MYA-4617 / FGSC 8958)</name>
    <name type="common">Rice blast fungus</name>
    <name type="synonym">Magnaporthe oryzae</name>
    <dbReference type="NCBI Taxonomy" id="242507"/>
    <lineage>
        <taxon>Eukaryota</taxon>
        <taxon>Fungi</taxon>
        <taxon>Dikarya</taxon>
        <taxon>Ascomycota</taxon>
        <taxon>Pezizomycotina</taxon>
        <taxon>Sordariomycetes</taxon>
        <taxon>Sordariomycetidae</taxon>
        <taxon>Magnaporthales</taxon>
        <taxon>Pyriculariaceae</taxon>
        <taxon>Pyricularia</taxon>
    </lineage>
</organism>
<reference key="1">
    <citation type="journal article" date="2005" name="Nature">
        <title>The genome sequence of the rice blast fungus Magnaporthe grisea.</title>
        <authorList>
            <person name="Dean R.A."/>
            <person name="Talbot N.J."/>
            <person name="Ebbole D.J."/>
            <person name="Farman M.L."/>
            <person name="Mitchell T.K."/>
            <person name="Orbach M.J."/>
            <person name="Thon M.R."/>
            <person name="Kulkarni R."/>
            <person name="Xu J.-R."/>
            <person name="Pan H."/>
            <person name="Read N.D."/>
            <person name="Lee Y.-H."/>
            <person name="Carbone I."/>
            <person name="Brown D."/>
            <person name="Oh Y.Y."/>
            <person name="Donofrio N."/>
            <person name="Jeong J.S."/>
            <person name="Soanes D.M."/>
            <person name="Djonovic S."/>
            <person name="Kolomiets E."/>
            <person name="Rehmeyer C."/>
            <person name="Li W."/>
            <person name="Harding M."/>
            <person name="Kim S."/>
            <person name="Lebrun M.-H."/>
            <person name="Bohnert H."/>
            <person name="Coughlan S."/>
            <person name="Butler J."/>
            <person name="Calvo S.E."/>
            <person name="Ma L.-J."/>
            <person name="Nicol R."/>
            <person name="Purcell S."/>
            <person name="Nusbaum C."/>
            <person name="Galagan J.E."/>
            <person name="Birren B.W."/>
        </authorList>
    </citation>
    <scope>NUCLEOTIDE SEQUENCE [LARGE SCALE GENOMIC DNA]</scope>
    <source>
        <strain>70-15 / ATCC MYA-4617 / FGSC 8958</strain>
    </source>
</reference>